<sequence length="114" mass="13371">MKAINRLRKNEDFRKVYKKRKSMANKLLIIYILENGYNFNRVGFTVSKKVGKSVIRSRVKRLLNESYRLNNEKVKQGYDIIFVARNTCVDASYKEIESAILHLLKKMNLINSAV</sequence>
<keyword id="KW-0255">Endonuclease</keyword>
<keyword id="KW-0378">Hydrolase</keyword>
<keyword id="KW-0540">Nuclease</keyword>
<keyword id="KW-1185">Reference proteome</keyword>
<keyword id="KW-0694">RNA-binding</keyword>
<keyword id="KW-0819">tRNA processing</keyword>
<name>RNPA_ALKOO</name>
<protein>
    <recommendedName>
        <fullName evidence="1">Ribonuclease P protein component</fullName>
        <shortName evidence="1">RNase P protein</shortName>
        <shortName evidence="1">RNaseP protein</shortName>
        <ecNumber evidence="1">3.1.26.5</ecNumber>
    </recommendedName>
    <alternativeName>
        <fullName evidence="1">Protein C5</fullName>
    </alternativeName>
</protein>
<accession>A8MKS3</accession>
<gene>
    <name evidence="1" type="primary">rnpA</name>
    <name type="ordered locus">Clos_2876</name>
</gene>
<evidence type="ECO:0000255" key="1">
    <source>
        <dbReference type="HAMAP-Rule" id="MF_00227"/>
    </source>
</evidence>
<comment type="function">
    <text evidence="1">RNaseP catalyzes the removal of the 5'-leader sequence from pre-tRNA to produce the mature 5'-terminus. It can also cleave other RNA substrates such as 4.5S RNA. The protein component plays an auxiliary but essential role in vivo by binding to the 5'-leader sequence and broadening the substrate specificity of the ribozyme.</text>
</comment>
<comment type="catalytic activity">
    <reaction evidence="1">
        <text>Endonucleolytic cleavage of RNA, removing 5'-extranucleotides from tRNA precursor.</text>
        <dbReference type="EC" id="3.1.26.5"/>
    </reaction>
</comment>
<comment type="subunit">
    <text evidence="1">Consists of a catalytic RNA component (M1 or rnpB) and a protein subunit.</text>
</comment>
<comment type="similarity">
    <text evidence="1">Belongs to the RnpA family.</text>
</comment>
<organism>
    <name type="scientific">Alkaliphilus oremlandii (strain OhILAs)</name>
    <name type="common">Clostridium oremlandii (strain OhILAs)</name>
    <dbReference type="NCBI Taxonomy" id="350688"/>
    <lineage>
        <taxon>Bacteria</taxon>
        <taxon>Bacillati</taxon>
        <taxon>Bacillota</taxon>
        <taxon>Clostridia</taxon>
        <taxon>Peptostreptococcales</taxon>
        <taxon>Natronincolaceae</taxon>
        <taxon>Alkaliphilus</taxon>
    </lineage>
</organism>
<reference key="1">
    <citation type="submission" date="2007-10" db="EMBL/GenBank/DDBJ databases">
        <title>Complete genome of Alkaliphilus oremlandii OhILAs.</title>
        <authorList>
            <person name="Copeland A."/>
            <person name="Lucas S."/>
            <person name="Lapidus A."/>
            <person name="Barry K."/>
            <person name="Detter J.C."/>
            <person name="Glavina del Rio T."/>
            <person name="Hammon N."/>
            <person name="Israni S."/>
            <person name="Dalin E."/>
            <person name="Tice H."/>
            <person name="Pitluck S."/>
            <person name="Chain P."/>
            <person name="Malfatti S."/>
            <person name="Shin M."/>
            <person name="Vergez L."/>
            <person name="Schmutz J."/>
            <person name="Larimer F."/>
            <person name="Land M."/>
            <person name="Hauser L."/>
            <person name="Kyrpides N."/>
            <person name="Mikhailova N."/>
            <person name="Stolz J.F."/>
            <person name="Dawson A."/>
            <person name="Fisher E."/>
            <person name="Crable B."/>
            <person name="Perera E."/>
            <person name="Lisak J."/>
            <person name="Ranganathan M."/>
            <person name="Basu P."/>
            <person name="Richardson P."/>
        </authorList>
    </citation>
    <scope>NUCLEOTIDE SEQUENCE [LARGE SCALE GENOMIC DNA]</scope>
    <source>
        <strain>OhILAs</strain>
    </source>
</reference>
<dbReference type="EC" id="3.1.26.5" evidence="1"/>
<dbReference type="EMBL" id="CP000853">
    <property type="protein sequence ID" value="ABW20405.1"/>
    <property type="molecule type" value="Genomic_DNA"/>
</dbReference>
<dbReference type="RefSeq" id="WP_012160712.1">
    <property type="nucleotide sequence ID" value="NC_009922.1"/>
</dbReference>
<dbReference type="SMR" id="A8MKS3"/>
<dbReference type="STRING" id="350688.Clos_2876"/>
<dbReference type="KEGG" id="aoe:Clos_2876"/>
<dbReference type="eggNOG" id="COG0594">
    <property type="taxonomic scope" value="Bacteria"/>
</dbReference>
<dbReference type="HOGENOM" id="CLU_117179_9_3_9"/>
<dbReference type="Proteomes" id="UP000000269">
    <property type="component" value="Chromosome"/>
</dbReference>
<dbReference type="GO" id="GO:0030677">
    <property type="term" value="C:ribonuclease P complex"/>
    <property type="evidence" value="ECO:0007669"/>
    <property type="project" value="TreeGrafter"/>
</dbReference>
<dbReference type="GO" id="GO:0042781">
    <property type="term" value="F:3'-tRNA processing endoribonuclease activity"/>
    <property type="evidence" value="ECO:0007669"/>
    <property type="project" value="TreeGrafter"/>
</dbReference>
<dbReference type="GO" id="GO:0004526">
    <property type="term" value="F:ribonuclease P activity"/>
    <property type="evidence" value="ECO:0007669"/>
    <property type="project" value="UniProtKB-UniRule"/>
</dbReference>
<dbReference type="GO" id="GO:0000049">
    <property type="term" value="F:tRNA binding"/>
    <property type="evidence" value="ECO:0007669"/>
    <property type="project" value="UniProtKB-UniRule"/>
</dbReference>
<dbReference type="GO" id="GO:0001682">
    <property type="term" value="P:tRNA 5'-leader removal"/>
    <property type="evidence" value="ECO:0007669"/>
    <property type="project" value="UniProtKB-UniRule"/>
</dbReference>
<dbReference type="Gene3D" id="3.30.230.10">
    <property type="match status" value="1"/>
</dbReference>
<dbReference type="HAMAP" id="MF_00227">
    <property type="entry name" value="RNase_P"/>
    <property type="match status" value="1"/>
</dbReference>
<dbReference type="InterPro" id="IPR020568">
    <property type="entry name" value="Ribosomal_Su5_D2-typ_SF"/>
</dbReference>
<dbReference type="InterPro" id="IPR014721">
    <property type="entry name" value="Ribsml_uS5_D2-typ_fold_subgr"/>
</dbReference>
<dbReference type="InterPro" id="IPR000100">
    <property type="entry name" value="RNase_P"/>
</dbReference>
<dbReference type="NCBIfam" id="TIGR00188">
    <property type="entry name" value="rnpA"/>
    <property type="match status" value="1"/>
</dbReference>
<dbReference type="PANTHER" id="PTHR33992">
    <property type="entry name" value="RIBONUCLEASE P PROTEIN COMPONENT"/>
    <property type="match status" value="1"/>
</dbReference>
<dbReference type="PANTHER" id="PTHR33992:SF1">
    <property type="entry name" value="RIBONUCLEASE P PROTEIN COMPONENT"/>
    <property type="match status" value="1"/>
</dbReference>
<dbReference type="Pfam" id="PF00825">
    <property type="entry name" value="Ribonuclease_P"/>
    <property type="match status" value="1"/>
</dbReference>
<dbReference type="SUPFAM" id="SSF54211">
    <property type="entry name" value="Ribosomal protein S5 domain 2-like"/>
    <property type="match status" value="1"/>
</dbReference>
<feature type="chain" id="PRO_1000058748" description="Ribonuclease P protein component">
    <location>
        <begin position="1"/>
        <end position="114"/>
    </location>
</feature>
<proteinExistence type="inferred from homology"/>